<comment type="function">
    <text evidence="1">Phosphorolytic 3'-5' exoribonuclease that plays an important role in tRNA 3'-end maturation. Removes nucleotide residues following the 3'-CCA terminus of tRNAs; can also add nucleotides to the ends of RNA molecules by using nucleoside diphosphates as substrates, but this may not be physiologically important. Probably plays a role in initiation of 16S rRNA degradation (leading to ribosome degradation) during starvation.</text>
</comment>
<comment type="catalytic activity">
    <reaction evidence="1">
        <text>tRNA(n+1) + phosphate = tRNA(n) + a ribonucleoside 5'-diphosphate</text>
        <dbReference type="Rhea" id="RHEA:10628"/>
        <dbReference type="Rhea" id="RHEA-COMP:17343"/>
        <dbReference type="Rhea" id="RHEA-COMP:17344"/>
        <dbReference type="ChEBI" id="CHEBI:43474"/>
        <dbReference type="ChEBI" id="CHEBI:57930"/>
        <dbReference type="ChEBI" id="CHEBI:173114"/>
        <dbReference type="EC" id="2.7.7.56"/>
    </reaction>
</comment>
<comment type="subunit">
    <text evidence="1">Homohexameric ring arranged as a trimer of dimers.</text>
</comment>
<comment type="similarity">
    <text evidence="1">Belongs to the RNase PH family.</text>
</comment>
<evidence type="ECO:0000255" key="1">
    <source>
        <dbReference type="HAMAP-Rule" id="MF_00564"/>
    </source>
</evidence>
<dbReference type="EC" id="2.7.7.56" evidence="1"/>
<dbReference type="EMBL" id="AM286415">
    <property type="protein sequence ID" value="CAL10200.1"/>
    <property type="molecule type" value="Genomic_DNA"/>
</dbReference>
<dbReference type="RefSeq" id="WP_005175960.1">
    <property type="nucleotide sequence ID" value="NC_008800.1"/>
</dbReference>
<dbReference type="RefSeq" id="YP_001004452.1">
    <property type="nucleotide sequence ID" value="NC_008800.1"/>
</dbReference>
<dbReference type="SMR" id="A1JHW7"/>
<dbReference type="GeneID" id="93972984"/>
<dbReference type="KEGG" id="yen:YE0058"/>
<dbReference type="PATRIC" id="fig|393305.7.peg.146"/>
<dbReference type="eggNOG" id="COG0689">
    <property type="taxonomic scope" value="Bacteria"/>
</dbReference>
<dbReference type="HOGENOM" id="CLU_050858_0_0_6"/>
<dbReference type="OrthoDB" id="9802265at2"/>
<dbReference type="Proteomes" id="UP000000642">
    <property type="component" value="Chromosome"/>
</dbReference>
<dbReference type="GO" id="GO:0000175">
    <property type="term" value="F:3'-5'-RNA exonuclease activity"/>
    <property type="evidence" value="ECO:0007669"/>
    <property type="project" value="UniProtKB-UniRule"/>
</dbReference>
<dbReference type="GO" id="GO:0000049">
    <property type="term" value="F:tRNA binding"/>
    <property type="evidence" value="ECO:0007669"/>
    <property type="project" value="UniProtKB-UniRule"/>
</dbReference>
<dbReference type="GO" id="GO:0009022">
    <property type="term" value="F:tRNA nucleotidyltransferase activity"/>
    <property type="evidence" value="ECO:0007669"/>
    <property type="project" value="UniProtKB-UniRule"/>
</dbReference>
<dbReference type="GO" id="GO:0016075">
    <property type="term" value="P:rRNA catabolic process"/>
    <property type="evidence" value="ECO:0007669"/>
    <property type="project" value="UniProtKB-UniRule"/>
</dbReference>
<dbReference type="GO" id="GO:0006364">
    <property type="term" value="P:rRNA processing"/>
    <property type="evidence" value="ECO:0007669"/>
    <property type="project" value="UniProtKB-KW"/>
</dbReference>
<dbReference type="GO" id="GO:0008033">
    <property type="term" value="P:tRNA processing"/>
    <property type="evidence" value="ECO:0007669"/>
    <property type="project" value="UniProtKB-UniRule"/>
</dbReference>
<dbReference type="CDD" id="cd11362">
    <property type="entry name" value="RNase_PH_bact"/>
    <property type="match status" value="1"/>
</dbReference>
<dbReference type="FunFam" id="3.30.230.70:FF:000003">
    <property type="entry name" value="Ribonuclease PH"/>
    <property type="match status" value="1"/>
</dbReference>
<dbReference type="Gene3D" id="3.30.230.70">
    <property type="entry name" value="GHMP Kinase, N-terminal domain"/>
    <property type="match status" value="1"/>
</dbReference>
<dbReference type="HAMAP" id="MF_00564">
    <property type="entry name" value="RNase_PH"/>
    <property type="match status" value="1"/>
</dbReference>
<dbReference type="InterPro" id="IPR001247">
    <property type="entry name" value="ExoRNase_PH_dom1"/>
</dbReference>
<dbReference type="InterPro" id="IPR015847">
    <property type="entry name" value="ExoRNase_PH_dom2"/>
</dbReference>
<dbReference type="InterPro" id="IPR036345">
    <property type="entry name" value="ExoRNase_PH_dom2_sf"/>
</dbReference>
<dbReference type="InterPro" id="IPR027408">
    <property type="entry name" value="PNPase/RNase_PH_dom_sf"/>
</dbReference>
<dbReference type="InterPro" id="IPR020568">
    <property type="entry name" value="Ribosomal_Su5_D2-typ_SF"/>
</dbReference>
<dbReference type="InterPro" id="IPR050080">
    <property type="entry name" value="RNase_PH"/>
</dbReference>
<dbReference type="InterPro" id="IPR002381">
    <property type="entry name" value="RNase_PH_bac-type"/>
</dbReference>
<dbReference type="InterPro" id="IPR018336">
    <property type="entry name" value="RNase_PH_CS"/>
</dbReference>
<dbReference type="NCBIfam" id="TIGR01966">
    <property type="entry name" value="RNasePH"/>
    <property type="match status" value="1"/>
</dbReference>
<dbReference type="PANTHER" id="PTHR11953">
    <property type="entry name" value="EXOSOME COMPLEX COMPONENT"/>
    <property type="match status" value="1"/>
</dbReference>
<dbReference type="PANTHER" id="PTHR11953:SF0">
    <property type="entry name" value="EXOSOME COMPLEX COMPONENT RRP41"/>
    <property type="match status" value="1"/>
</dbReference>
<dbReference type="Pfam" id="PF01138">
    <property type="entry name" value="RNase_PH"/>
    <property type="match status" value="1"/>
</dbReference>
<dbReference type="Pfam" id="PF03725">
    <property type="entry name" value="RNase_PH_C"/>
    <property type="match status" value="1"/>
</dbReference>
<dbReference type="SUPFAM" id="SSF55666">
    <property type="entry name" value="Ribonuclease PH domain 2-like"/>
    <property type="match status" value="1"/>
</dbReference>
<dbReference type="SUPFAM" id="SSF54211">
    <property type="entry name" value="Ribosomal protein S5 domain 2-like"/>
    <property type="match status" value="1"/>
</dbReference>
<dbReference type="PROSITE" id="PS01277">
    <property type="entry name" value="RIBONUCLEASE_PH"/>
    <property type="match status" value="1"/>
</dbReference>
<proteinExistence type="inferred from homology"/>
<gene>
    <name evidence="1" type="primary">rph</name>
    <name type="ordered locus">YE0058</name>
</gene>
<accession>A1JHW7</accession>
<keyword id="KW-0548">Nucleotidyltransferase</keyword>
<keyword id="KW-0694">RNA-binding</keyword>
<keyword id="KW-0698">rRNA processing</keyword>
<keyword id="KW-0808">Transferase</keyword>
<keyword id="KW-0819">tRNA processing</keyword>
<keyword id="KW-0820">tRNA-binding</keyword>
<name>RNPH_YERE8</name>
<feature type="chain" id="PRO_1000024907" description="Ribonuclease PH">
    <location>
        <begin position="1"/>
        <end position="238"/>
    </location>
</feature>
<feature type="binding site" evidence="1">
    <location>
        <position position="86"/>
    </location>
    <ligand>
        <name>phosphate</name>
        <dbReference type="ChEBI" id="CHEBI:43474"/>
        <note>substrate</note>
    </ligand>
</feature>
<feature type="binding site" evidence="1">
    <location>
        <begin position="124"/>
        <end position="126"/>
    </location>
    <ligand>
        <name>phosphate</name>
        <dbReference type="ChEBI" id="CHEBI:43474"/>
        <note>substrate</note>
    </ligand>
</feature>
<sequence>MRPADRAAQQVRPLTLTRNYTKHAEGSVLVEFGDTKVLCTATVEEGVPRFLKGQGQGWITAEYGMLPRSTHSRNAREAAKGKQGGRTLEIQRLIARSLRAAVDLKKLGEFTITLDCDVLQADGGTRTASISGACVALADALNKLVASGKLKANPMKGLVAAVSVGIVKGEALCDLEYVEDSAAETDMNVVMMEDGRMIEVQGTAEGEPFSHEELLTLLALARGGIETIFQAQKAALEQ</sequence>
<organism>
    <name type="scientific">Yersinia enterocolitica serotype O:8 / biotype 1B (strain NCTC 13174 / 8081)</name>
    <dbReference type="NCBI Taxonomy" id="393305"/>
    <lineage>
        <taxon>Bacteria</taxon>
        <taxon>Pseudomonadati</taxon>
        <taxon>Pseudomonadota</taxon>
        <taxon>Gammaproteobacteria</taxon>
        <taxon>Enterobacterales</taxon>
        <taxon>Yersiniaceae</taxon>
        <taxon>Yersinia</taxon>
    </lineage>
</organism>
<protein>
    <recommendedName>
        <fullName evidence="1">Ribonuclease PH</fullName>
        <shortName evidence="1">RNase PH</shortName>
        <ecNumber evidence="1">2.7.7.56</ecNumber>
    </recommendedName>
    <alternativeName>
        <fullName evidence="1">tRNA nucleotidyltransferase</fullName>
    </alternativeName>
</protein>
<reference key="1">
    <citation type="journal article" date="2006" name="PLoS Genet.">
        <title>The complete genome sequence and comparative genome analysis of the high pathogenicity Yersinia enterocolitica strain 8081.</title>
        <authorList>
            <person name="Thomson N.R."/>
            <person name="Howard S."/>
            <person name="Wren B.W."/>
            <person name="Holden M.T.G."/>
            <person name="Crossman L."/>
            <person name="Challis G.L."/>
            <person name="Churcher C."/>
            <person name="Mungall K."/>
            <person name="Brooks K."/>
            <person name="Chillingworth T."/>
            <person name="Feltwell T."/>
            <person name="Abdellah Z."/>
            <person name="Hauser H."/>
            <person name="Jagels K."/>
            <person name="Maddison M."/>
            <person name="Moule S."/>
            <person name="Sanders M."/>
            <person name="Whitehead S."/>
            <person name="Quail M.A."/>
            <person name="Dougan G."/>
            <person name="Parkhill J."/>
            <person name="Prentice M.B."/>
        </authorList>
    </citation>
    <scope>NUCLEOTIDE SEQUENCE [LARGE SCALE GENOMIC DNA]</scope>
    <source>
        <strain>NCTC 13174 / 8081</strain>
    </source>
</reference>